<reference key="1">
    <citation type="journal article" date="2010" name="Environ. Microbiol.">
        <title>The genome of Syntrophomonas wolfei: new insights into syntrophic metabolism and biohydrogen production.</title>
        <authorList>
            <person name="Sieber J.R."/>
            <person name="Sims D.R."/>
            <person name="Han C."/>
            <person name="Kim E."/>
            <person name="Lykidis A."/>
            <person name="Lapidus A.L."/>
            <person name="McDonnald E."/>
            <person name="Rohlin L."/>
            <person name="Culley D.E."/>
            <person name="Gunsalus R."/>
            <person name="McInerney M.J."/>
        </authorList>
    </citation>
    <scope>NUCLEOTIDE SEQUENCE [LARGE SCALE GENOMIC DNA]</scope>
    <source>
        <strain>DSM 2245B / Goettingen</strain>
    </source>
</reference>
<protein>
    <recommendedName>
        <fullName evidence="1">LexA repressor</fullName>
        <ecNumber evidence="1">3.4.21.88</ecNumber>
    </recommendedName>
</protein>
<dbReference type="EC" id="3.4.21.88" evidence="1"/>
<dbReference type="EMBL" id="CP000448">
    <property type="protein sequence ID" value="ABI68322.1"/>
    <property type="molecule type" value="Genomic_DNA"/>
</dbReference>
<dbReference type="RefSeq" id="WP_011640427.1">
    <property type="nucleotide sequence ID" value="NC_008346.1"/>
</dbReference>
<dbReference type="SMR" id="Q0AY82"/>
<dbReference type="STRING" id="335541.Swol_1008"/>
<dbReference type="MEROPS" id="S24.001"/>
<dbReference type="KEGG" id="swo:Swol_1008"/>
<dbReference type="eggNOG" id="COG1974">
    <property type="taxonomic scope" value="Bacteria"/>
</dbReference>
<dbReference type="HOGENOM" id="CLU_066192_45_1_9"/>
<dbReference type="OrthoDB" id="9802364at2"/>
<dbReference type="Proteomes" id="UP000001968">
    <property type="component" value="Chromosome"/>
</dbReference>
<dbReference type="GO" id="GO:0003677">
    <property type="term" value="F:DNA binding"/>
    <property type="evidence" value="ECO:0007669"/>
    <property type="project" value="UniProtKB-UniRule"/>
</dbReference>
<dbReference type="GO" id="GO:0004252">
    <property type="term" value="F:serine-type endopeptidase activity"/>
    <property type="evidence" value="ECO:0007669"/>
    <property type="project" value="UniProtKB-UniRule"/>
</dbReference>
<dbReference type="GO" id="GO:0006281">
    <property type="term" value="P:DNA repair"/>
    <property type="evidence" value="ECO:0007669"/>
    <property type="project" value="UniProtKB-UniRule"/>
</dbReference>
<dbReference type="GO" id="GO:0006260">
    <property type="term" value="P:DNA replication"/>
    <property type="evidence" value="ECO:0007669"/>
    <property type="project" value="UniProtKB-UniRule"/>
</dbReference>
<dbReference type="GO" id="GO:0045892">
    <property type="term" value="P:negative regulation of DNA-templated transcription"/>
    <property type="evidence" value="ECO:0007669"/>
    <property type="project" value="UniProtKB-UniRule"/>
</dbReference>
<dbReference type="GO" id="GO:0006508">
    <property type="term" value="P:proteolysis"/>
    <property type="evidence" value="ECO:0007669"/>
    <property type="project" value="InterPro"/>
</dbReference>
<dbReference type="GO" id="GO:0009432">
    <property type="term" value="P:SOS response"/>
    <property type="evidence" value="ECO:0007669"/>
    <property type="project" value="UniProtKB-UniRule"/>
</dbReference>
<dbReference type="CDD" id="cd00090">
    <property type="entry name" value="HTH_ARSR"/>
    <property type="match status" value="1"/>
</dbReference>
<dbReference type="CDD" id="cd06529">
    <property type="entry name" value="S24_LexA-like"/>
    <property type="match status" value="1"/>
</dbReference>
<dbReference type="FunFam" id="1.10.10.10:FF:000009">
    <property type="entry name" value="LexA repressor"/>
    <property type="match status" value="1"/>
</dbReference>
<dbReference type="FunFam" id="2.10.109.10:FF:000001">
    <property type="entry name" value="LexA repressor"/>
    <property type="match status" value="1"/>
</dbReference>
<dbReference type="Gene3D" id="2.10.109.10">
    <property type="entry name" value="Umud Fragment, subunit A"/>
    <property type="match status" value="1"/>
</dbReference>
<dbReference type="Gene3D" id="1.10.10.10">
    <property type="entry name" value="Winged helix-like DNA-binding domain superfamily/Winged helix DNA-binding domain"/>
    <property type="match status" value="1"/>
</dbReference>
<dbReference type="HAMAP" id="MF_00015">
    <property type="entry name" value="LexA"/>
    <property type="match status" value="1"/>
</dbReference>
<dbReference type="InterPro" id="IPR011991">
    <property type="entry name" value="ArsR-like_HTH"/>
</dbReference>
<dbReference type="InterPro" id="IPR006200">
    <property type="entry name" value="LexA"/>
</dbReference>
<dbReference type="InterPro" id="IPR039418">
    <property type="entry name" value="LexA-like"/>
</dbReference>
<dbReference type="InterPro" id="IPR036286">
    <property type="entry name" value="LexA/Signal_pep-like_sf"/>
</dbReference>
<dbReference type="InterPro" id="IPR006199">
    <property type="entry name" value="LexA_DNA-bd_dom"/>
</dbReference>
<dbReference type="InterPro" id="IPR050077">
    <property type="entry name" value="LexA_repressor"/>
</dbReference>
<dbReference type="InterPro" id="IPR006197">
    <property type="entry name" value="Peptidase_S24_LexA"/>
</dbReference>
<dbReference type="InterPro" id="IPR015927">
    <property type="entry name" value="Peptidase_S24_S26A/B/C"/>
</dbReference>
<dbReference type="InterPro" id="IPR036388">
    <property type="entry name" value="WH-like_DNA-bd_sf"/>
</dbReference>
<dbReference type="InterPro" id="IPR036390">
    <property type="entry name" value="WH_DNA-bd_sf"/>
</dbReference>
<dbReference type="NCBIfam" id="TIGR00498">
    <property type="entry name" value="lexA"/>
    <property type="match status" value="1"/>
</dbReference>
<dbReference type="PANTHER" id="PTHR33516">
    <property type="entry name" value="LEXA REPRESSOR"/>
    <property type="match status" value="1"/>
</dbReference>
<dbReference type="PANTHER" id="PTHR33516:SF2">
    <property type="entry name" value="LEXA REPRESSOR-RELATED"/>
    <property type="match status" value="1"/>
</dbReference>
<dbReference type="Pfam" id="PF01726">
    <property type="entry name" value="LexA_DNA_bind"/>
    <property type="match status" value="1"/>
</dbReference>
<dbReference type="Pfam" id="PF00717">
    <property type="entry name" value="Peptidase_S24"/>
    <property type="match status" value="1"/>
</dbReference>
<dbReference type="PRINTS" id="PR00726">
    <property type="entry name" value="LEXASERPTASE"/>
</dbReference>
<dbReference type="SUPFAM" id="SSF51306">
    <property type="entry name" value="LexA/Signal peptidase"/>
    <property type="match status" value="1"/>
</dbReference>
<dbReference type="SUPFAM" id="SSF46785">
    <property type="entry name" value="Winged helix' DNA-binding domain"/>
    <property type="match status" value="1"/>
</dbReference>
<keyword id="KW-0068">Autocatalytic cleavage</keyword>
<keyword id="KW-0227">DNA damage</keyword>
<keyword id="KW-0234">DNA repair</keyword>
<keyword id="KW-0235">DNA replication</keyword>
<keyword id="KW-0238">DNA-binding</keyword>
<keyword id="KW-0378">Hydrolase</keyword>
<keyword id="KW-1185">Reference proteome</keyword>
<keyword id="KW-0678">Repressor</keyword>
<keyword id="KW-0742">SOS response</keyword>
<keyword id="KW-0804">Transcription</keyword>
<keyword id="KW-0805">Transcription regulation</keyword>
<gene>
    <name evidence="1" type="primary">lexA</name>
    <name type="ordered locus">Swol_1008</name>
</gene>
<proteinExistence type="inferred from homology"/>
<evidence type="ECO:0000255" key="1">
    <source>
        <dbReference type="HAMAP-Rule" id="MF_00015"/>
    </source>
</evidence>
<organism>
    <name type="scientific">Syntrophomonas wolfei subsp. wolfei (strain DSM 2245B / Goettingen)</name>
    <dbReference type="NCBI Taxonomy" id="335541"/>
    <lineage>
        <taxon>Bacteria</taxon>
        <taxon>Bacillati</taxon>
        <taxon>Bacillota</taxon>
        <taxon>Clostridia</taxon>
        <taxon>Eubacteriales</taxon>
        <taxon>Syntrophomonadaceae</taxon>
        <taxon>Syntrophomonas</taxon>
    </lineage>
</organism>
<name>LEXA_SYNWW</name>
<comment type="function">
    <text evidence="1">Represses a number of genes involved in the response to DNA damage (SOS response), including recA and lexA. In the presence of single-stranded DNA, RecA interacts with LexA causing an autocatalytic cleavage which disrupts the DNA-binding part of LexA, leading to derepression of the SOS regulon and eventually DNA repair.</text>
</comment>
<comment type="catalytic activity">
    <reaction evidence="1">
        <text>Hydrolysis of Ala-|-Gly bond in repressor LexA.</text>
        <dbReference type="EC" id="3.4.21.88"/>
    </reaction>
</comment>
<comment type="subunit">
    <text evidence="1">Homodimer.</text>
</comment>
<comment type="similarity">
    <text evidence="1">Belongs to the peptidase S24 family.</text>
</comment>
<sequence length="204" mass="22477">MNNELKLGKRQKQILDFIKQSCKEKGYPPSVREIGQAVGLKSSSTVHTHLVRLEEKGLIRRDPAKPRAIIPLDDEPLLQSEALSVPVIGNVAAGSPILAEQNIDNYLSIPVDFLGSGNHFILKVKGDSMIEAGILDGDYLIVREQADASNGEIVVALLDNEATVKRFYRRDDYVELRPENALMDPITVNNVQVAGKVAGLLRRI</sequence>
<accession>Q0AY82</accession>
<feature type="chain" id="PRO_0000322768" description="LexA repressor">
    <location>
        <begin position="1"/>
        <end position="204"/>
    </location>
</feature>
<feature type="DNA-binding region" description="H-T-H motif" evidence="1">
    <location>
        <begin position="31"/>
        <end position="51"/>
    </location>
</feature>
<feature type="active site" description="For autocatalytic cleavage activity" evidence="1">
    <location>
        <position position="128"/>
    </location>
</feature>
<feature type="active site" description="For autocatalytic cleavage activity" evidence="1">
    <location>
        <position position="165"/>
    </location>
</feature>
<feature type="site" description="Cleavage; by autolysis" evidence="1">
    <location>
        <begin position="93"/>
        <end position="94"/>
    </location>
</feature>